<dbReference type="EMBL" id="AF271784">
    <property type="protein sequence ID" value="AAG44795.1"/>
    <property type="molecule type" value="mRNA"/>
</dbReference>
<dbReference type="EMBL" id="AF221595">
    <property type="protein sequence ID" value="AAF91232.1"/>
    <property type="molecule type" value="mRNA"/>
</dbReference>
<dbReference type="EMBL" id="AF218024">
    <property type="protein sequence ID" value="AAG17266.1"/>
    <property type="molecule type" value="mRNA"/>
</dbReference>
<dbReference type="EMBL" id="AK313005">
    <property type="protein sequence ID" value="BAG35841.1"/>
    <property type="molecule type" value="mRNA"/>
</dbReference>
<dbReference type="EMBL" id="AL031295">
    <property type="status" value="NOT_ANNOTATED_CDS"/>
    <property type="molecule type" value="Genomic_DNA"/>
</dbReference>
<dbReference type="EMBL" id="CH471134">
    <property type="protein sequence ID" value="EAW95075.1"/>
    <property type="molecule type" value="Genomic_DNA"/>
</dbReference>
<dbReference type="EMBL" id="BC017208">
    <property type="protein sequence ID" value="AAH17208.1"/>
    <property type="molecule type" value="mRNA"/>
</dbReference>
<dbReference type="CCDS" id="CCDS240.1">
    <molecule id="Q9GZP4-1"/>
</dbReference>
<dbReference type="RefSeq" id="NP_065095.2">
    <molecule id="Q9GZP4-1"/>
    <property type="nucleotide sequence ID" value="NM_020362.4"/>
</dbReference>
<dbReference type="SMR" id="Q9GZP4"/>
<dbReference type="BioGRID" id="121363">
    <property type="interactions" value="56"/>
</dbReference>
<dbReference type="FunCoup" id="Q9GZP4">
    <property type="interactions" value="3582"/>
</dbReference>
<dbReference type="IntAct" id="Q9GZP4">
    <property type="interactions" value="18"/>
</dbReference>
<dbReference type="MINT" id="Q9GZP4"/>
<dbReference type="STRING" id="9606.ENSP00000246151"/>
<dbReference type="GlyGen" id="Q9GZP4">
    <property type="glycosylation" value="3 sites, 2 O-linked glycans (3 sites)"/>
</dbReference>
<dbReference type="iPTMnet" id="Q9GZP4"/>
<dbReference type="PhosphoSitePlus" id="Q9GZP4"/>
<dbReference type="SwissPalm" id="Q9GZP4"/>
<dbReference type="BioMuta" id="PITHD1"/>
<dbReference type="DMDM" id="74752536"/>
<dbReference type="REPRODUCTION-2DPAGE" id="IPI00015351"/>
<dbReference type="jPOST" id="Q9GZP4"/>
<dbReference type="MassIVE" id="Q9GZP4"/>
<dbReference type="PaxDb" id="9606-ENSP00000246151"/>
<dbReference type="PeptideAtlas" id="Q9GZP4"/>
<dbReference type="ProteomicsDB" id="80105">
    <molecule id="Q9GZP4-1"/>
</dbReference>
<dbReference type="ProteomicsDB" id="80106">
    <molecule id="Q9GZP4-2"/>
</dbReference>
<dbReference type="Pumba" id="Q9GZP4"/>
<dbReference type="Antibodypedia" id="2117">
    <property type="antibodies" value="11 antibodies from 8 providers"/>
</dbReference>
<dbReference type="DNASU" id="57095"/>
<dbReference type="Ensembl" id="ENST00000246151.9">
    <molecule id="Q9GZP4-1"/>
    <property type="protein sequence ID" value="ENSP00000246151.4"/>
    <property type="gene ID" value="ENSG00000057757.10"/>
</dbReference>
<dbReference type="GeneID" id="57095"/>
<dbReference type="KEGG" id="hsa:57095"/>
<dbReference type="MANE-Select" id="ENST00000246151.9">
    <property type="protein sequence ID" value="ENSP00000246151.4"/>
    <property type="RefSeq nucleotide sequence ID" value="NM_020362.5"/>
    <property type="RefSeq protein sequence ID" value="NP_065095.2"/>
</dbReference>
<dbReference type="UCSC" id="uc001bhq.4">
    <molecule id="Q9GZP4-1"/>
    <property type="organism name" value="human"/>
</dbReference>
<dbReference type="AGR" id="HGNC:25022"/>
<dbReference type="CTD" id="57095"/>
<dbReference type="DisGeNET" id="57095"/>
<dbReference type="GeneCards" id="PITHD1"/>
<dbReference type="HGNC" id="HGNC:25022">
    <property type="gene designation" value="PITHD1"/>
</dbReference>
<dbReference type="HPA" id="ENSG00000057757">
    <property type="expression patterns" value="Low tissue specificity"/>
</dbReference>
<dbReference type="MIM" id="618784">
    <property type="type" value="gene"/>
</dbReference>
<dbReference type="neXtProt" id="NX_Q9GZP4"/>
<dbReference type="OpenTargets" id="ENSG00000057757"/>
<dbReference type="PharmGKB" id="PA142672446"/>
<dbReference type="VEuPathDB" id="HostDB:ENSG00000057757"/>
<dbReference type="eggNOG" id="KOG1730">
    <property type="taxonomic scope" value="Eukaryota"/>
</dbReference>
<dbReference type="GeneTree" id="ENSGT00490000043398"/>
<dbReference type="HOGENOM" id="CLU_072377_2_0_1"/>
<dbReference type="InParanoid" id="Q9GZP4"/>
<dbReference type="OMA" id="RLVFKPW"/>
<dbReference type="OrthoDB" id="2635at2759"/>
<dbReference type="PAN-GO" id="Q9GZP4">
    <property type="GO annotations" value="1 GO annotation based on evolutionary models"/>
</dbReference>
<dbReference type="PhylomeDB" id="Q9GZP4"/>
<dbReference type="TreeFam" id="TF314669"/>
<dbReference type="PathwayCommons" id="Q9GZP4"/>
<dbReference type="SignaLink" id="Q9GZP4"/>
<dbReference type="BioGRID-ORCS" id="57095">
    <property type="hits" value="11 hits in 1150 CRISPR screens"/>
</dbReference>
<dbReference type="ChiTaRS" id="PITHD1">
    <property type="organism name" value="human"/>
</dbReference>
<dbReference type="GenomeRNAi" id="57095"/>
<dbReference type="Pharos" id="Q9GZP4">
    <property type="development level" value="Tdark"/>
</dbReference>
<dbReference type="PRO" id="PR:Q9GZP4"/>
<dbReference type="Proteomes" id="UP000005640">
    <property type="component" value="Chromosome 1"/>
</dbReference>
<dbReference type="RNAct" id="Q9GZP4">
    <property type="molecule type" value="protein"/>
</dbReference>
<dbReference type="Bgee" id="ENSG00000057757">
    <property type="expression patterns" value="Expressed in secondary oocyte and 183 other cell types or tissues"/>
</dbReference>
<dbReference type="ExpressionAtlas" id="Q9GZP4">
    <property type="expression patterns" value="baseline and differential"/>
</dbReference>
<dbReference type="GO" id="GO:0005737">
    <property type="term" value="C:cytoplasm"/>
    <property type="evidence" value="ECO:0000314"/>
    <property type="project" value="UniProtKB"/>
</dbReference>
<dbReference type="GO" id="GO:0005634">
    <property type="term" value="C:nucleus"/>
    <property type="evidence" value="ECO:0007005"/>
    <property type="project" value="UniProtKB"/>
</dbReference>
<dbReference type="GO" id="GO:0097598">
    <property type="term" value="C:sperm cytoplasmic droplet"/>
    <property type="evidence" value="ECO:0007669"/>
    <property type="project" value="Ensembl"/>
</dbReference>
<dbReference type="GO" id="GO:0061956">
    <property type="term" value="P:penetration of cumulus oophorus"/>
    <property type="evidence" value="ECO:0007669"/>
    <property type="project" value="Ensembl"/>
</dbReference>
<dbReference type="GO" id="GO:0007341">
    <property type="term" value="P:penetration of zona pellucida"/>
    <property type="evidence" value="ECO:0007669"/>
    <property type="project" value="Ensembl"/>
</dbReference>
<dbReference type="GO" id="GO:0045893">
    <property type="term" value="P:positive regulation of DNA-templated transcription"/>
    <property type="evidence" value="ECO:0000314"/>
    <property type="project" value="UniProtKB"/>
</dbReference>
<dbReference type="GO" id="GO:0045654">
    <property type="term" value="P:positive regulation of megakaryocyte differentiation"/>
    <property type="evidence" value="ECO:0000315"/>
    <property type="project" value="UniProtKB"/>
</dbReference>
<dbReference type="GO" id="GO:0061136">
    <property type="term" value="P:regulation of proteasomal protein catabolic process"/>
    <property type="evidence" value="ECO:0007669"/>
    <property type="project" value="Ensembl"/>
</dbReference>
<dbReference type="GO" id="GO:0007286">
    <property type="term" value="P:spermatid development"/>
    <property type="evidence" value="ECO:0007669"/>
    <property type="project" value="Ensembl"/>
</dbReference>
<dbReference type="FunFam" id="2.60.120.470:FF:000002">
    <property type="entry name" value="PITH domain-containing protein 1"/>
    <property type="match status" value="1"/>
</dbReference>
<dbReference type="Gene3D" id="2.60.120.470">
    <property type="entry name" value="PITH domain"/>
    <property type="match status" value="1"/>
</dbReference>
<dbReference type="InterPro" id="IPR008979">
    <property type="entry name" value="Galactose-bd-like_sf"/>
</dbReference>
<dbReference type="InterPro" id="IPR045099">
    <property type="entry name" value="PITH1-like"/>
</dbReference>
<dbReference type="InterPro" id="IPR010400">
    <property type="entry name" value="PITH_dom"/>
</dbReference>
<dbReference type="InterPro" id="IPR037047">
    <property type="entry name" value="PITH_dom_sf"/>
</dbReference>
<dbReference type="PANTHER" id="PTHR12175">
    <property type="entry name" value="AD039 HT014 THIOREDOXIN FAMILY TRP26"/>
    <property type="match status" value="1"/>
</dbReference>
<dbReference type="PANTHER" id="PTHR12175:SF1">
    <property type="entry name" value="PITH DOMAIN-CONTAINING PROTEIN 1"/>
    <property type="match status" value="1"/>
</dbReference>
<dbReference type="Pfam" id="PF06201">
    <property type="entry name" value="PITH"/>
    <property type="match status" value="1"/>
</dbReference>
<dbReference type="SUPFAM" id="SSF49785">
    <property type="entry name" value="Galactose-binding domain-like"/>
    <property type="match status" value="1"/>
</dbReference>
<dbReference type="PROSITE" id="PS51532">
    <property type="entry name" value="PITH"/>
    <property type="match status" value="1"/>
</dbReference>
<gene>
    <name type="primary">PITHD1</name>
    <name type="synonym">C1orf128</name>
    <name type="ORF">AD039</name>
    <name type="ORF">HT014</name>
    <name type="ORF">PP603</name>
</gene>
<feature type="chain" id="PRO_0000285032" description="PITH domain-containing protein 1">
    <location>
        <begin position="1"/>
        <end position="211"/>
    </location>
</feature>
<feature type="domain" description="PITH" evidence="1">
    <location>
        <begin position="20"/>
        <end position="192"/>
    </location>
</feature>
<feature type="modified residue" description="Phosphotyrosine" evidence="5">
    <location>
        <position position="189"/>
    </location>
</feature>
<feature type="splice variant" id="VSP_024807" description="In isoform 2." evidence="3">
    <location>
        <position position="53"/>
    </location>
</feature>
<organism>
    <name type="scientific">Homo sapiens</name>
    <name type="common">Human</name>
    <dbReference type="NCBI Taxonomy" id="9606"/>
    <lineage>
        <taxon>Eukaryota</taxon>
        <taxon>Metazoa</taxon>
        <taxon>Chordata</taxon>
        <taxon>Craniata</taxon>
        <taxon>Vertebrata</taxon>
        <taxon>Euteleostomi</taxon>
        <taxon>Mammalia</taxon>
        <taxon>Eutheria</taxon>
        <taxon>Euarchontoglires</taxon>
        <taxon>Primates</taxon>
        <taxon>Haplorrhini</taxon>
        <taxon>Catarrhini</taxon>
        <taxon>Hominidae</taxon>
        <taxon>Homo</taxon>
    </lineage>
</organism>
<proteinExistence type="evidence at protein level"/>
<evidence type="ECO:0000255" key="1">
    <source>
        <dbReference type="PROSITE-ProRule" id="PRU00864"/>
    </source>
</evidence>
<evidence type="ECO:0000269" key="2">
    <source>
    </source>
</evidence>
<evidence type="ECO:0000303" key="3">
    <source>
    </source>
</evidence>
<evidence type="ECO:0000305" key="4"/>
<evidence type="ECO:0007744" key="5">
    <source>
    </source>
</evidence>
<sequence length="211" mass="24178">MSHGHSHGGGGCRCAAEREEPPEQRGLAYGLYLRIDLERLQCLNESREGSGRGVFKPWEERTDRSKFVESDADEELLFNIPFTGNVKLKGIIIMGEDDDSHPSEMRLYKNIPQMSFDDTEREPDQTFSLNRDLTGELEYATKISRFSNVYHLSIHISKNFGADTTKVFYIGLRGEWTELRRHEVTICNYEASANPADHRVHQVTPQTHFIS</sequence>
<keyword id="KW-0010">Activator</keyword>
<keyword id="KW-0025">Alternative splicing</keyword>
<keyword id="KW-0963">Cytoplasm</keyword>
<keyword id="KW-0597">Phosphoprotein</keyword>
<keyword id="KW-1267">Proteomics identification</keyword>
<keyword id="KW-1185">Reference proteome</keyword>
<keyword id="KW-0804">Transcription</keyword>
<keyword id="KW-0805">Transcription regulation</keyword>
<protein>
    <recommendedName>
        <fullName>PITH domain-containing protein 1</fullName>
    </recommendedName>
</protein>
<reference key="1">
    <citation type="submission" date="2000-05" db="EMBL/GenBank/DDBJ databases">
        <authorList>
            <person name="Xu X."/>
            <person name="Yang Y."/>
            <person name="Gao G."/>
            <person name="Xiao H."/>
            <person name="Chen Z."/>
            <person name="Han Z."/>
        </authorList>
    </citation>
    <scope>NUCLEOTIDE SEQUENCE [LARGE SCALE MRNA] (ISOFORM 1)</scope>
    <source>
        <tissue>Adrenal gland</tissue>
    </source>
</reference>
<reference key="2">
    <citation type="journal article" date="2000" name="Proc. Natl. Acad. Sci. U.S.A.">
        <title>Gene expression profiling in the human hypothalamus-pituitary-adrenal axis and full-length cDNA cloning.</title>
        <authorList>
            <person name="Hu R.-M."/>
            <person name="Han Z.-G."/>
            <person name="Song H.-D."/>
            <person name="Peng Y.-D."/>
            <person name="Huang Q.-H."/>
            <person name="Ren S.-X."/>
            <person name="Gu Y.-J."/>
            <person name="Huang C.-H."/>
            <person name="Li Y.-B."/>
            <person name="Jiang C.-L."/>
            <person name="Fu G."/>
            <person name="Zhang Q.-H."/>
            <person name="Gu B.-W."/>
            <person name="Dai M."/>
            <person name="Mao Y.-F."/>
            <person name="Gao G.-F."/>
            <person name="Rong R."/>
            <person name="Ye M."/>
            <person name="Zhou J."/>
            <person name="Xu S.-H."/>
            <person name="Gu J."/>
            <person name="Shi J.-X."/>
            <person name="Jin W.-R."/>
            <person name="Zhang C.-K."/>
            <person name="Wu T.-M."/>
            <person name="Huang G.-Y."/>
            <person name="Chen Z."/>
            <person name="Chen M.-D."/>
            <person name="Chen J.-L."/>
        </authorList>
    </citation>
    <scope>NUCLEOTIDE SEQUENCE [LARGE SCALE MRNA] (ISOFORM 2)</scope>
    <source>
        <tissue>Hypothalamus</tissue>
    </source>
</reference>
<reference key="3">
    <citation type="journal article" date="2004" name="Proc. Natl. Acad. Sci. U.S.A.">
        <title>Large-scale cDNA transfection screening for genes related to cancer development and progression.</title>
        <authorList>
            <person name="Wan D."/>
            <person name="Gong Y."/>
            <person name="Qin W."/>
            <person name="Zhang P."/>
            <person name="Li J."/>
            <person name="Wei L."/>
            <person name="Zhou X."/>
            <person name="Li H."/>
            <person name="Qiu X."/>
            <person name="Zhong F."/>
            <person name="He L."/>
            <person name="Yu J."/>
            <person name="Yao G."/>
            <person name="Jiang H."/>
            <person name="Qian L."/>
            <person name="Yu Y."/>
            <person name="Shu H."/>
            <person name="Chen X."/>
            <person name="Xu H."/>
            <person name="Guo M."/>
            <person name="Pan Z."/>
            <person name="Chen Y."/>
            <person name="Ge C."/>
            <person name="Yang S."/>
            <person name="Gu J."/>
        </authorList>
    </citation>
    <scope>NUCLEOTIDE SEQUENCE [LARGE SCALE MRNA] (ISOFORM 1)</scope>
</reference>
<reference key="4">
    <citation type="journal article" date="2004" name="Nat. Genet.">
        <title>Complete sequencing and characterization of 21,243 full-length human cDNAs.</title>
        <authorList>
            <person name="Ota T."/>
            <person name="Suzuki Y."/>
            <person name="Nishikawa T."/>
            <person name="Otsuki T."/>
            <person name="Sugiyama T."/>
            <person name="Irie R."/>
            <person name="Wakamatsu A."/>
            <person name="Hayashi K."/>
            <person name="Sato H."/>
            <person name="Nagai K."/>
            <person name="Kimura K."/>
            <person name="Makita H."/>
            <person name="Sekine M."/>
            <person name="Obayashi M."/>
            <person name="Nishi T."/>
            <person name="Shibahara T."/>
            <person name="Tanaka T."/>
            <person name="Ishii S."/>
            <person name="Yamamoto J."/>
            <person name="Saito K."/>
            <person name="Kawai Y."/>
            <person name="Isono Y."/>
            <person name="Nakamura Y."/>
            <person name="Nagahari K."/>
            <person name="Murakami K."/>
            <person name="Yasuda T."/>
            <person name="Iwayanagi T."/>
            <person name="Wagatsuma M."/>
            <person name="Shiratori A."/>
            <person name="Sudo H."/>
            <person name="Hosoiri T."/>
            <person name="Kaku Y."/>
            <person name="Kodaira H."/>
            <person name="Kondo H."/>
            <person name="Sugawara M."/>
            <person name="Takahashi M."/>
            <person name="Kanda K."/>
            <person name="Yokoi T."/>
            <person name="Furuya T."/>
            <person name="Kikkawa E."/>
            <person name="Omura Y."/>
            <person name="Abe K."/>
            <person name="Kamihara K."/>
            <person name="Katsuta N."/>
            <person name="Sato K."/>
            <person name="Tanikawa M."/>
            <person name="Yamazaki M."/>
            <person name="Ninomiya K."/>
            <person name="Ishibashi T."/>
            <person name="Yamashita H."/>
            <person name="Murakawa K."/>
            <person name="Fujimori K."/>
            <person name="Tanai H."/>
            <person name="Kimata M."/>
            <person name="Watanabe M."/>
            <person name="Hiraoka S."/>
            <person name="Chiba Y."/>
            <person name="Ishida S."/>
            <person name="Ono Y."/>
            <person name="Takiguchi S."/>
            <person name="Watanabe S."/>
            <person name="Yosida M."/>
            <person name="Hotuta T."/>
            <person name="Kusano J."/>
            <person name="Kanehori K."/>
            <person name="Takahashi-Fujii A."/>
            <person name="Hara H."/>
            <person name="Tanase T.-O."/>
            <person name="Nomura Y."/>
            <person name="Togiya S."/>
            <person name="Komai F."/>
            <person name="Hara R."/>
            <person name="Takeuchi K."/>
            <person name="Arita M."/>
            <person name="Imose N."/>
            <person name="Musashino K."/>
            <person name="Yuuki H."/>
            <person name="Oshima A."/>
            <person name="Sasaki N."/>
            <person name="Aotsuka S."/>
            <person name="Yoshikawa Y."/>
            <person name="Matsunawa H."/>
            <person name="Ichihara T."/>
            <person name="Shiohata N."/>
            <person name="Sano S."/>
            <person name="Moriya S."/>
            <person name="Momiyama H."/>
            <person name="Satoh N."/>
            <person name="Takami S."/>
            <person name="Terashima Y."/>
            <person name="Suzuki O."/>
            <person name="Nakagawa S."/>
            <person name="Senoh A."/>
            <person name="Mizoguchi H."/>
            <person name="Goto Y."/>
            <person name="Shimizu F."/>
            <person name="Wakebe H."/>
            <person name="Hishigaki H."/>
            <person name="Watanabe T."/>
            <person name="Sugiyama A."/>
            <person name="Takemoto M."/>
            <person name="Kawakami B."/>
            <person name="Yamazaki M."/>
            <person name="Watanabe K."/>
            <person name="Kumagai A."/>
            <person name="Itakura S."/>
            <person name="Fukuzumi Y."/>
            <person name="Fujimori Y."/>
            <person name="Komiyama M."/>
            <person name="Tashiro H."/>
            <person name="Tanigami A."/>
            <person name="Fujiwara T."/>
            <person name="Ono T."/>
            <person name="Yamada K."/>
            <person name="Fujii Y."/>
            <person name="Ozaki K."/>
            <person name="Hirao M."/>
            <person name="Ohmori Y."/>
            <person name="Kawabata A."/>
            <person name="Hikiji T."/>
            <person name="Kobatake N."/>
            <person name="Inagaki H."/>
            <person name="Ikema Y."/>
            <person name="Okamoto S."/>
            <person name="Okitani R."/>
            <person name="Kawakami T."/>
            <person name="Noguchi S."/>
            <person name="Itoh T."/>
            <person name="Shigeta K."/>
            <person name="Senba T."/>
            <person name="Matsumura K."/>
            <person name="Nakajima Y."/>
            <person name="Mizuno T."/>
            <person name="Morinaga M."/>
            <person name="Sasaki M."/>
            <person name="Togashi T."/>
            <person name="Oyama M."/>
            <person name="Hata H."/>
            <person name="Watanabe M."/>
            <person name="Komatsu T."/>
            <person name="Mizushima-Sugano J."/>
            <person name="Satoh T."/>
            <person name="Shirai Y."/>
            <person name="Takahashi Y."/>
            <person name="Nakagawa K."/>
            <person name="Okumura K."/>
            <person name="Nagase T."/>
            <person name="Nomura N."/>
            <person name="Kikuchi H."/>
            <person name="Masuho Y."/>
            <person name="Yamashita R."/>
            <person name="Nakai K."/>
            <person name="Yada T."/>
            <person name="Nakamura Y."/>
            <person name="Ohara O."/>
            <person name="Isogai T."/>
            <person name="Sugano S."/>
        </authorList>
    </citation>
    <scope>NUCLEOTIDE SEQUENCE [LARGE SCALE MRNA] (ISOFORM 1)</scope>
    <source>
        <tissue>Cerebellum</tissue>
    </source>
</reference>
<reference key="5">
    <citation type="journal article" date="2006" name="Nature">
        <title>The DNA sequence and biological annotation of human chromosome 1.</title>
        <authorList>
            <person name="Gregory S.G."/>
            <person name="Barlow K.F."/>
            <person name="McLay K.E."/>
            <person name="Kaul R."/>
            <person name="Swarbreck D."/>
            <person name="Dunham A."/>
            <person name="Scott C.E."/>
            <person name="Howe K.L."/>
            <person name="Woodfine K."/>
            <person name="Spencer C.C.A."/>
            <person name="Jones M.C."/>
            <person name="Gillson C."/>
            <person name="Searle S."/>
            <person name="Zhou Y."/>
            <person name="Kokocinski F."/>
            <person name="McDonald L."/>
            <person name="Evans R."/>
            <person name="Phillips K."/>
            <person name="Atkinson A."/>
            <person name="Cooper R."/>
            <person name="Jones C."/>
            <person name="Hall R.E."/>
            <person name="Andrews T.D."/>
            <person name="Lloyd C."/>
            <person name="Ainscough R."/>
            <person name="Almeida J.P."/>
            <person name="Ambrose K.D."/>
            <person name="Anderson F."/>
            <person name="Andrew R.W."/>
            <person name="Ashwell R.I.S."/>
            <person name="Aubin K."/>
            <person name="Babbage A.K."/>
            <person name="Bagguley C.L."/>
            <person name="Bailey J."/>
            <person name="Beasley H."/>
            <person name="Bethel G."/>
            <person name="Bird C.P."/>
            <person name="Bray-Allen S."/>
            <person name="Brown J.Y."/>
            <person name="Brown A.J."/>
            <person name="Buckley D."/>
            <person name="Burton J."/>
            <person name="Bye J."/>
            <person name="Carder C."/>
            <person name="Chapman J.C."/>
            <person name="Clark S.Y."/>
            <person name="Clarke G."/>
            <person name="Clee C."/>
            <person name="Cobley V."/>
            <person name="Collier R.E."/>
            <person name="Corby N."/>
            <person name="Coville G.J."/>
            <person name="Davies J."/>
            <person name="Deadman R."/>
            <person name="Dunn M."/>
            <person name="Earthrowl M."/>
            <person name="Ellington A.G."/>
            <person name="Errington H."/>
            <person name="Frankish A."/>
            <person name="Frankland J."/>
            <person name="French L."/>
            <person name="Garner P."/>
            <person name="Garnett J."/>
            <person name="Gay L."/>
            <person name="Ghori M.R.J."/>
            <person name="Gibson R."/>
            <person name="Gilby L.M."/>
            <person name="Gillett W."/>
            <person name="Glithero R.J."/>
            <person name="Grafham D.V."/>
            <person name="Griffiths C."/>
            <person name="Griffiths-Jones S."/>
            <person name="Grocock R."/>
            <person name="Hammond S."/>
            <person name="Harrison E.S.I."/>
            <person name="Hart E."/>
            <person name="Haugen E."/>
            <person name="Heath P.D."/>
            <person name="Holmes S."/>
            <person name="Holt K."/>
            <person name="Howden P.J."/>
            <person name="Hunt A.R."/>
            <person name="Hunt S.E."/>
            <person name="Hunter G."/>
            <person name="Isherwood J."/>
            <person name="James R."/>
            <person name="Johnson C."/>
            <person name="Johnson D."/>
            <person name="Joy A."/>
            <person name="Kay M."/>
            <person name="Kershaw J.K."/>
            <person name="Kibukawa M."/>
            <person name="Kimberley A.M."/>
            <person name="King A."/>
            <person name="Knights A.J."/>
            <person name="Lad H."/>
            <person name="Laird G."/>
            <person name="Lawlor S."/>
            <person name="Leongamornlert D.A."/>
            <person name="Lloyd D.M."/>
            <person name="Loveland J."/>
            <person name="Lovell J."/>
            <person name="Lush M.J."/>
            <person name="Lyne R."/>
            <person name="Martin S."/>
            <person name="Mashreghi-Mohammadi M."/>
            <person name="Matthews L."/>
            <person name="Matthews N.S.W."/>
            <person name="McLaren S."/>
            <person name="Milne S."/>
            <person name="Mistry S."/>
            <person name="Moore M.J.F."/>
            <person name="Nickerson T."/>
            <person name="O'Dell C.N."/>
            <person name="Oliver K."/>
            <person name="Palmeiri A."/>
            <person name="Palmer S.A."/>
            <person name="Parker A."/>
            <person name="Patel D."/>
            <person name="Pearce A.V."/>
            <person name="Peck A.I."/>
            <person name="Pelan S."/>
            <person name="Phelps K."/>
            <person name="Phillimore B.J."/>
            <person name="Plumb R."/>
            <person name="Rajan J."/>
            <person name="Raymond C."/>
            <person name="Rouse G."/>
            <person name="Saenphimmachak C."/>
            <person name="Sehra H.K."/>
            <person name="Sheridan E."/>
            <person name="Shownkeen R."/>
            <person name="Sims S."/>
            <person name="Skuce C.D."/>
            <person name="Smith M."/>
            <person name="Steward C."/>
            <person name="Subramanian S."/>
            <person name="Sycamore N."/>
            <person name="Tracey A."/>
            <person name="Tromans A."/>
            <person name="Van Helmond Z."/>
            <person name="Wall M."/>
            <person name="Wallis J.M."/>
            <person name="White S."/>
            <person name="Whitehead S.L."/>
            <person name="Wilkinson J.E."/>
            <person name="Willey D.L."/>
            <person name="Williams H."/>
            <person name="Wilming L."/>
            <person name="Wray P.W."/>
            <person name="Wu Z."/>
            <person name="Coulson A."/>
            <person name="Vaudin M."/>
            <person name="Sulston J.E."/>
            <person name="Durbin R.M."/>
            <person name="Hubbard T."/>
            <person name="Wooster R."/>
            <person name="Dunham I."/>
            <person name="Carter N.P."/>
            <person name="McVean G."/>
            <person name="Ross M.T."/>
            <person name="Harrow J."/>
            <person name="Olson M.V."/>
            <person name="Beck S."/>
            <person name="Rogers J."/>
            <person name="Bentley D.R."/>
        </authorList>
    </citation>
    <scope>NUCLEOTIDE SEQUENCE [LARGE SCALE GENOMIC DNA]</scope>
</reference>
<reference key="6">
    <citation type="submission" date="2005-07" db="EMBL/GenBank/DDBJ databases">
        <authorList>
            <person name="Mural R.J."/>
            <person name="Istrail S."/>
            <person name="Sutton G.G."/>
            <person name="Florea L."/>
            <person name="Halpern A.L."/>
            <person name="Mobarry C.M."/>
            <person name="Lippert R."/>
            <person name="Walenz B."/>
            <person name="Shatkay H."/>
            <person name="Dew I."/>
            <person name="Miller J.R."/>
            <person name="Flanigan M.J."/>
            <person name="Edwards N.J."/>
            <person name="Bolanos R."/>
            <person name="Fasulo D."/>
            <person name="Halldorsson B.V."/>
            <person name="Hannenhalli S."/>
            <person name="Turner R."/>
            <person name="Yooseph S."/>
            <person name="Lu F."/>
            <person name="Nusskern D.R."/>
            <person name="Shue B.C."/>
            <person name="Zheng X.H."/>
            <person name="Zhong F."/>
            <person name="Delcher A.L."/>
            <person name="Huson D.H."/>
            <person name="Kravitz S.A."/>
            <person name="Mouchard L."/>
            <person name="Reinert K."/>
            <person name="Remington K.A."/>
            <person name="Clark A.G."/>
            <person name="Waterman M.S."/>
            <person name="Eichler E.E."/>
            <person name="Adams M.D."/>
            <person name="Hunkapiller M.W."/>
            <person name="Myers E.W."/>
            <person name="Venter J.C."/>
        </authorList>
    </citation>
    <scope>NUCLEOTIDE SEQUENCE [LARGE SCALE GENOMIC DNA]</scope>
</reference>
<reference key="7">
    <citation type="journal article" date="2004" name="Genome Res.">
        <title>The status, quality, and expansion of the NIH full-length cDNA project: the Mammalian Gene Collection (MGC).</title>
        <authorList>
            <consortium name="The MGC Project Team"/>
        </authorList>
    </citation>
    <scope>NUCLEOTIDE SEQUENCE [LARGE SCALE MRNA] (ISOFORM 1)</scope>
    <source>
        <tissue>Lung</tissue>
    </source>
</reference>
<reference key="8">
    <citation type="journal article" date="2005" name="Nat. Biotechnol.">
        <title>Immunoaffinity profiling of tyrosine phosphorylation in cancer cells.</title>
        <authorList>
            <person name="Rush J."/>
            <person name="Moritz A."/>
            <person name="Lee K.A."/>
            <person name="Guo A."/>
            <person name="Goss V.L."/>
            <person name="Spek E.J."/>
            <person name="Zhang H."/>
            <person name="Zha X.-M."/>
            <person name="Polakiewicz R.D."/>
            <person name="Comb M.J."/>
        </authorList>
    </citation>
    <scope>PHOSPHORYLATION [LARGE SCALE ANALYSIS] AT TYR-189</scope>
    <scope>IDENTIFICATION BY MASS SPECTROMETRY [LARGE SCALE ANALYSIS]</scope>
</reference>
<reference key="9">
    <citation type="journal article" date="2011" name="BMC Syst. Biol.">
        <title>Initial characterization of the human central proteome.</title>
        <authorList>
            <person name="Burkard T.R."/>
            <person name="Planyavsky M."/>
            <person name="Kaupe I."/>
            <person name="Breitwieser F.P."/>
            <person name="Buerckstuemmer T."/>
            <person name="Bennett K.L."/>
            <person name="Superti-Furga G."/>
            <person name="Colinge J."/>
        </authorList>
    </citation>
    <scope>IDENTIFICATION BY MASS SPECTROMETRY [LARGE SCALE ANALYSIS]</scope>
</reference>
<reference key="10">
    <citation type="journal article" date="2014" name="J. Proteomics">
        <title>An enzyme assisted RP-RPLC approach for in-depth analysis of human liver phosphoproteome.</title>
        <authorList>
            <person name="Bian Y."/>
            <person name="Song C."/>
            <person name="Cheng K."/>
            <person name="Dong M."/>
            <person name="Wang F."/>
            <person name="Huang J."/>
            <person name="Sun D."/>
            <person name="Wang L."/>
            <person name="Ye M."/>
            <person name="Zou H."/>
        </authorList>
    </citation>
    <scope>IDENTIFICATION BY MASS SPECTROMETRY [LARGE SCALE ANALYSIS]</scope>
    <source>
        <tissue>Liver</tissue>
    </source>
</reference>
<reference key="11">
    <citation type="journal article" date="2015" name="Cell. Mol. Life Sci.">
        <title>Novel function of PITH domain-containing 1 as an activator of internal ribosomal entry site to enhance RUNX1 expression and promote megakaryocyte differentiation.</title>
        <authorList>
            <person name="Lu B."/>
            <person name="Sun X."/>
            <person name="Chen Y."/>
            <person name="Jin Q."/>
            <person name="Liang Q."/>
            <person name="Liu S."/>
            <person name="Li Y."/>
            <person name="Zhou Y."/>
            <person name="Li W."/>
            <person name="Huang Z."/>
        </authorList>
    </citation>
    <scope>FUNCTION</scope>
    <scope>INDUCTION</scope>
    <scope>SUBCELLULAR LOCATION</scope>
    <scope>TISSUE SPECIFICITY</scope>
</reference>
<comment type="function">
    <text evidence="2">Promotes megakaryocyte differentiation by up-regulating RUNX1 expression (PubMed:25134913). Regulates RUNX1 expression by activating the proximal promoter of the RUNX1 gene and by enhancing the translation activity of an internal ribosome entry site (IRES) element in the RUNX1 gene (PubMed:25134913).</text>
</comment>
<comment type="subcellular location">
    <subcellularLocation>
        <location evidence="2">Cytoplasm</location>
    </subcellularLocation>
</comment>
<comment type="alternative products">
    <event type="alternative splicing"/>
    <isoform>
        <id>Q9GZP4-1</id>
        <name>1</name>
        <sequence type="displayed"/>
    </isoform>
    <isoform>
        <id>Q9GZP4-2</id>
        <name>2</name>
        <sequence type="described" ref="VSP_024807"/>
    </isoform>
</comment>
<comment type="tissue specificity">
    <text evidence="2">Down-regulated in primary acute myeloid leukemia (AML) patients.</text>
</comment>
<comment type="induction">
    <text evidence="2">Up-regulated in K562 and HEL cells undergoing megakaryocyte differentiation induced by phorbol myristate acetate (PMA).</text>
</comment>
<comment type="similarity">
    <text evidence="4">Belongs to the PITHD1 family.</text>
</comment>
<accession>Q9GZP4</accession>
<accession>B2R7J4</accession>
<accession>Q5QPN6</accession>
<accession>Q5QPN7</accession>
<accession>Q9NRI8</accession>
<name>PITH1_HUMAN</name>